<organism>
    <name type="scientific">Marinobacter nauticus (strain ATCC 700491 / DSM 11845 / VT8)</name>
    <name type="common">Marinobacter aquaeolei</name>
    <dbReference type="NCBI Taxonomy" id="351348"/>
    <lineage>
        <taxon>Bacteria</taxon>
        <taxon>Pseudomonadati</taxon>
        <taxon>Pseudomonadota</taxon>
        <taxon>Gammaproteobacteria</taxon>
        <taxon>Pseudomonadales</taxon>
        <taxon>Marinobacteraceae</taxon>
        <taxon>Marinobacter</taxon>
    </lineage>
</organism>
<gene>
    <name evidence="1" type="primary">ureF</name>
    <name type="ordered locus">Maqu_2991</name>
</gene>
<proteinExistence type="inferred from homology"/>
<sequence length="231" mass="25150">MATNTPTEPGGDLALLGLMQLVSPALPIGAFAWSQGLESAFELGWVNNEAELAQWIEGVLEDGLSRCELPLLARLQTAWANDDGATIAHWNQWLHATRETAELSDEDTRLGGALKTLLGNLNLLPDQTLIPAEPGYITLFAWAAQVRRVPVRQTLLGFAWAWLENQLAVACKALPLGHTAAQRIIEQLRPALVNATDQALARQDHELGPILPGLALGSALHETQYSRLFRS</sequence>
<protein>
    <recommendedName>
        <fullName evidence="1">Urease accessory protein UreF</fullName>
    </recommendedName>
</protein>
<evidence type="ECO:0000255" key="1">
    <source>
        <dbReference type="HAMAP-Rule" id="MF_01385"/>
    </source>
</evidence>
<comment type="function">
    <text evidence="1">Required for maturation of urease via the functional incorporation of the urease nickel metallocenter.</text>
</comment>
<comment type="subunit">
    <text evidence="1">UreD, UreF and UreG form a complex that acts as a GTP-hydrolysis-dependent molecular chaperone, activating the urease apoprotein by helping to assemble the nickel containing metallocenter of UreC. The UreE protein probably delivers the nickel.</text>
</comment>
<comment type="subcellular location">
    <subcellularLocation>
        <location evidence="1">Cytoplasm</location>
    </subcellularLocation>
</comment>
<comment type="similarity">
    <text evidence="1">Belongs to the UreF family.</text>
</comment>
<feature type="chain" id="PRO_0000344130" description="Urease accessory protein UreF">
    <location>
        <begin position="1"/>
        <end position="231"/>
    </location>
</feature>
<reference key="1">
    <citation type="journal article" date="2011" name="Appl. Environ. Microbiol.">
        <title>Genomic potential of Marinobacter aquaeolei, a biogeochemical 'opportunitroph'.</title>
        <authorList>
            <person name="Singer E."/>
            <person name="Webb E.A."/>
            <person name="Nelson W.C."/>
            <person name="Heidelberg J.F."/>
            <person name="Ivanova N."/>
            <person name="Pati A."/>
            <person name="Edwards K.J."/>
        </authorList>
    </citation>
    <scope>NUCLEOTIDE SEQUENCE [LARGE SCALE GENOMIC DNA]</scope>
    <source>
        <strain>ATCC 700491 / DSM 11845 / VT8</strain>
    </source>
</reference>
<name>UREF_MARN8</name>
<accession>A1U4Z6</accession>
<keyword id="KW-0143">Chaperone</keyword>
<keyword id="KW-0963">Cytoplasm</keyword>
<keyword id="KW-0996">Nickel insertion</keyword>
<dbReference type="EMBL" id="CP000514">
    <property type="protein sequence ID" value="ABM20065.1"/>
    <property type="molecule type" value="Genomic_DNA"/>
</dbReference>
<dbReference type="RefSeq" id="WP_011786433.1">
    <property type="nucleotide sequence ID" value="NC_008740.1"/>
</dbReference>
<dbReference type="SMR" id="A1U4Z6"/>
<dbReference type="STRING" id="351348.Maqu_2991"/>
<dbReference type="KEGG" id="maq:Maqu_2991"/>
<dbReference type="eggNOG" id="COG0830">
    <property type="taxonomic scope" value="Bacteria"/>
</dbReference>
<dbReference type="HOGENOM" id="CLU_049215_2_1_6"/>
<dbReference type="OrthoDB" id="9798772at2"/>
<dbReference type="Proteomes" id="UP000000998">
    <property type="component" value="Chromosome"/>
</dbReference>
<dbReference type="GO" id="GO:0005737">
    <property type="term" value="C:cytoplasm"/>
    <property type="evidence" value="ECO:0007669"/>
    <property type="project" value="UniProtKB-SubCell"/>
</dbReference>
<dbReference type="GO" id="GO:0016151">
    <property type="term" value="F:nickel cation binding"/>
    <property type="evidence" value="ECO:0007669"/>
    <property type="project" value="UniProtKB-UniRule"/>
</dbReference>
<dbReference type="Gene3D" id="1.10.4190.10">
    <property type="entry name" value="Urease accessory protein UreF"/>
    <property type="match status" value="1"/>
</dbReference>
<dbReference type="HAMAP" id="MF_01385">
    <property type="entry name" value="UreF"/>
    <property type="match status" value="1"/>
</dbReference>
<dbReference type="InterPro" id="IPR002639">
    <property type="entry name" value="UreF"/>
</dbReference>
<dbReference type="InterPro" id="IPR038277">
    <property type="entry name" value="UreF_sf"/>
</dbReference>
<dbReference type="PANTHER" id="PTHR33620">
    <property type="entry name" value="UREASE ACCESSORY PROTEIN F"/>
    <property type="match status" value="1"/>
</dbReference>
<dbReference type="PANTHER" id="PTHR33620:SF1">
    <property type="entry name" value="UREASE ACCESSORY PROTEIN F"/>
    <property type="match status" value="1"/>
</dbReference>
<dbReference type="Pfam" id="PF01730">
    <property type="entry name" value="UreF"/>
    <property type="match status" value="1"/>
</dbReference>
<dbReference type="PIRSF" id="PIRSF009467">
    <property type="entry name" value="Ureas_acces_UreF"/>
    <property type="match status" value="1"/>
</dbReference>